<reference key="1">
    <citation type="journal article" date="2004" name="Nat. Biotechnol.">
        <title>The genome sequence of the capnophilic rumen bacterium Mannheimia succiniciproducens.</title>
        <authorList>
            <person name="Hong S.H."/>
            <person name="Kim J.S."/>
            <person name="Lee S.Y."/>
            <person name="In Y.H."/>
            <person name="Choi S.S."/>
            <person name="Rih J.-K."/>
            <person name="Kim C.H."/>
            <person name="Jeong H."/>
            <person name="Hur C.G."/>
            <person name="Kim J.J."/>
        </authorList>
    </citation>
    <scope>NUCLEOTIDE SEQUENCE [LARGE SCALE GENOMIC DNA]</scope>
    <source>
        <strain>KCTC 0769BP / MBEL55E</strain>
    </source>
</reference>
<gene>
    <name evidence="1" type="primary">iscS</name>
    <name type="ordered locus">MS1726</name>
</gene>
<keyword id="KW-0001">2Fe-2S</keyword>
<keyword id="KW-0963">Cytoplasm</keyword>
<keyword id="KW-0408">Iron</keyword>
<keyword id="KW-0411">Iron-sulfur</keyword>
<keyword id="KW-0479">Metal-binding</keyword>
<keyword id="KW-0663">Pyridoxal phosphate</keyword>
<keyword id="KW-0808">Transferase</keyword>
<name>ISCS_MANSM</name>
<comment type="function">
    <text evidence="1">Master enzyme that delivers sulfur to a number of partners involved in Fe-S cluster assembly, tRNA modification or cofactor biosynthesis. Catalyzes the removal of elemental sulfur atoms from cysteine to produce alanine. Functions as a sulfur delivery protein for Fe-S cluster synthesis onto IscU, an Fe-S scaffold assembly protein, as well as other S acceptor proteins.</text>
</comment>
<comment type="catalytic activity">
    <reaction evidence="1">
        <text>(sulfur carrier)-H + L-cysteine = (sulfur carrier)-SH + L-alanine</text>
        <dbReference type="Rhea" id="RHEA:43892"/>
        <dbReference type="Rhea" id="RHEA-COMP:14737"/>
        <dbReference type="Rhea" id="RHEA-COMP:14739"/>
        <dbReference type="ChEBI" id="CHEBI:29917"/>
        <dbReference type="ChEBI" id="CHEBI:35235"/>
        <dbReference type="ChEBI" id="CHEBI:57972"/>
        <dbReference type="ChEBI" id="CHEBI:64428"/>
        <dbReference type="EC" id="2.8.1.7"/>
    </reaction>
</comment>
<comment type="cofactor">
    <cofactor evidence="1">
        <name>pyridoxal 5'-phosphate</name>
        <dbReference type="ChEBI" id="CHEBI:597326"/>
    </cofactor>
</comment>
<comment type="pathway">
    <text evidence="1">Cofactor biosynthesis; iron-sulfur cluster biosynthesis.</text>
</comment>
<comment type="subunit">
    <text evidence="1">Homodimer. Forms a heterotetramer with IscU, interacts with other sulfur acceptors.</text>
</comment>
<comment type="subcellular location">
    <subcellularLocation>
        <location evidence="1">Cytoplasm</location>
    </subcellularLocation>
</comment>
<comment type="similarity">
    <text evidence="1">Belongs to the class-V pyridoxal-phosphate-dependent aminotransferase family. NifS/IscS subfamily.</text>
</comment>
<organism>
    <name type="scientific">Mannheimia succiniciproducens (strain KCTC 0769BP / MBEL55E)</name>
    <dbReference type="NCBI Taxonomy" id="221988"/>
    <lineage>
        <taxon>Bacteria</taxon>
        <taxon>Pseudomonadati</taxon>
        <taxon>Pseudomonadota</taxon>
        <taxon>Gammaproteobacteria</taxon>
        <taxon>Pasteurellales</taxon>
        <taxon>Pasteurellaceae</taxon>
        <taxon>Basfia</taxon>
    </lineage>
</organism>
<sequence length="404" mass="45003">MKFPIYLDYAATCPADDRVAEKMMQYLTRDGIFGNPASRSHKFGWQAEEAVDIARNHIADLIGADSREIVFTSGATESDNLAIKGAAHFYQTKGKHIITCKTEHKAVLDTCRQLEREGFEVTYLAPKSDGLVDLDEFRAAIRPDTILASIMHVNNEIGVIQDIEAIGKICREHKVIFHVDATQSVGKLPINLAELPVDLMSMSGHKLYGPKGIGALYVRRKPRVRLEAIIHGGGHERGMRSGTLAVHQIVGMGEAYRICKEEMAEEMAHVTKLRDRLYNGLKDIEETYVNGSMEHRVGSNLNISFNFVEGESLMMALRDIAVSSGSACTSASLEPSYVLRALGLNDELAHSSIRFSLGRYTTEEEIDYTIDLVKSAVKKLRDLSPLWDMFKEGIDMSKIEWSAH</sequence>
<protein>
    <recommendedName>
        <fullName evidence="1">Cysteine desulfurase IscS</fullName>
        <ecNumber evidence="1">2.8.1.7</ecNumber>
    </recommendedName>
</protein>
<feature type="chain" id="PRO_1000019415" description="Cysteine desulfurase IscS">
    <location>
        <begin position="1"/>
        <end position="404"/>
    </location>
</feature>
<feature type="active site" description="Cysteine persulfide intermediate" evidence="1">
    <location>
        <position position="328"/>
    </location>
</feature>
<feature type="binding site" evidence="1">
    <location>
        <begin position="75"/>
        <end position="76"/>
    </location>
    <ligand>
        <name>pyridoxal 5'-phosphate</name>
        <dbReference type="ChEBI" id="CHEBI:597326"/>
    </ligand>
</feature>
<feature type="binding site" evidence="1">
    <location>
        <position position="155"/>
    </location>
    <ligand>
        <name>pyridoxal 5'-phosphate</name>
        <dbReference type="ChEBI" id="CHEBI:597326"/>
    </ligand>
</feature>
<feature type="binding site" evidence="1">
    <location>
        <position position="183"/>
    </location>
    <ligand>
        <name>pyridoxal 5'-phosphate</name>
        <dbReference type="ChEBI" id="CHEBI:597326"/>
    </ligand>
</feature>
<feature type="binding site" evidence="1">
    <location>
        <begin position="203"/>
        <end position="205"/>
    </location>
    <ligand>
        <name>pyridoxal 5'-phosphate</name>
        <dbReference type="ChEBI" id="CHEBI:597326"/>
    </ligand>
</feature>
<feature type="binding site" evidence="1">
    <location>
        <position position="243"/>
    </location>
    <ligand>
        <name>pyridoxal 5'-phosphate</name>
        <dbReference type="ChEBI" id="CHEBI:597326"/>
    </ligand>
</feature>
<feature type="binding site" description="via persulfide group" evidence="1">
    <location>
        <position position="328"/>
    </location>
    <ligand>
        <name>[2Fe-2S] cluster</name>
        <dbReference type="ChEBI" id="CHEBI:190135"/>
        <note>ligand shared with IscU</note>
    </ligand>
</feature>
<feature type="modified residue" description="N6-(pyridoxal phosphate)lysine" evidence="1">
    <location>
        <position position="206"/>
    </location>
</feature>
<evidence type="ECO:0000255" key="1">
    <source>
        <dbReference type="HAMAP-Rule" id="MF_00331"/>
    </source>
</evidence>
<dbReference type="EC" id="2.8.1.7" evidence="1"/>
<dbReference type="EMBL" id="AE016827">
    <property type="protein sequence ID" value="AAU38333.1"/>
    <property type="molecule type" value="Genomic_DNA"/>
</dbReference>
<dbReference type="RefSeq" id="WP_011200894.1">
    <property type="nucleotide sequence ID" value="NC_006300.1"/>
</dbReference>
<dbReference type="SMR" id="Q65RS7"/>
<dbReference type="STRING" id="221988.MS1726"/>
<dbReference type="KEGG" id="msu:MS1726"/>
<dbReference type="eggNOG" id="COG1104">
    <property type="taxonomic scope" value="Bacteria"/>
</dbReference>
<dbReference type="HOGENOM" id="CLU_003433_0_2_6"/>
<dbReference type="OrthoDB" id="9808002at2"/>
<dbReference type="UniPathway" id="UPA00266"/>
<dbReference type="Proteomes" id="UP000000607">
    <property type="component" value="Chromosome"/>
</dbReference>
<dbReference type="GO" id="GO:1990221">
    <property type="term" value="C:L-cysteine desulfurase complex"/>
    <property type="evidence" value="ECO:0007669"/>
    <property type="project" value="UniProtKB-ARBA"/>
</dbReference>
<dbReference type="GO" id="GO:0051537">
    <property type="term" value="F:2 iron, 2 sulfur cluster binding"/>
    <property type="evidence" value="ECO:0007669"/>
    <property type="project" value="UniProtKB-UniRule"/>
</dbReference>
<dbReference type="GO" id="GO:0031071">
    <property type="term" value="F:cysteine desulfurase activity"/>
    <property type="evidence" value="ECO:0007669"/>
    <property type="project" value="UniProtKB-UniRule"/>
</dbReference>
<dbReference type="GO" id="GO:0046872">
    <property type="term" value="F:metal ion binding"/>
    <property type="evidence" value="ECO:0007669"/>
    <property type="project" value="UniProtKB-KW"/>
</dbReference>
<dbReference type="GO" id="GO:0030170">
    <property type="term" value="F:pyridoxal phosphate binding"/>
    <property type="evidence" value="ECO:0007669"/>
    <property type="project" value="UniProtKB-UniRule"/>
</dbReference>
<dbReference type="GO" id="GO:0044571">
    <property type="term" value="P:[2Fe-2S] cluster assembly"/>
    <property type="evidence" value="ECO:0007669"/>
    <property type="project" value="UniProtKB-UniRule"/>
</dbReference>
<dbReference type="FunFam" id="3.40.640.10:FF:000003">
    <property type="entry name" value="Cysteine desulfurase IscS"/>
    <property type="match status" value="1"/>
</dbReference>
<dbReference type="FunFam" id="3.90.1150.10:FF:000002">
    <property type="entry name" value="Cysteine desulfurase IscS"/>
    <property type="match status" value="1"/>
</dbReference>
<dbReference type="Gene3D" id="3.90.1150.10">
    <property type="entry name" value="Aspartate Aminotransferase, domain 1"/>
    <property type="match status" value="1"/>
</dbReference>
<dbReference type="Gene3D" id="3.40.640.10">
    <property type="entry name" value="Type I PLP-dependent aspartate aminotransferase-like (Major domain)"/>
    <property type="match status" value="1"/>
</dbReference>
<dbReference type="HAMAP" id="MF_00331">
    <property type="entry name" value="Cys_desulf_IscS"/>
    <property type="match status" value="1"/>
</dbReference>
<dbReference type="InterPro" id="IPR000192">
    <property type="entry name" value="Aminotrans_V_dom"/>
</dbReference>
<dbReference type="InterPro" id="IPR020578">
    <property type="entry name" value="Aminotrans_V_PyrdxlP_BS"/>
</dbReference>
<dbReference type="InterPro" id="IPR010240">
    <property type="entry name" value="Cys_deSase_IscS"/>
</dbReference>
<dbReference type="InterPro" id="IPR016454">
    <property type="entry name" value="Cysteine_dSase"/>
</dbReference>
<dbReference type="InterPro" id="IPR015424">
    <property type="entry name" value="PyrdxlP-dep_Trfase"/>
</dbReference>
<dbReference type="InterPro" id="IPR015421">
    <property type="entry name" value="PyrdxlP-dep_Trfase_major"/>
</dbReference>
<dbReference type="InterPro" id="IPR015422">
    <property type="entry name" value="PyrdxlP-dep_Trfase_small"/>
</dbReference>
<dbReference type="NCBIfam" id="TIGR02006">
    <property type="entry name" value="IscS"/>
    <property type="match status" value="1"/>
</dbReference>
<dbReference type="NCBIfam" id="NF002806">
    <property type="entry name" value="PRK02948.1"/>
    <property type="match status" value="1"/>
</dbReference>
<dbReference type="NCBIfam" id="NF010611">
    <property type="entry name" value="PRK14012.1"/>
    <property type="match status" value="1"/>
</dbReference>
<dbReference type="PANTHER" id="PTHR11601:SF34">
    <property type="entry name" value="CYSTEINE DESULFURASE"/>
    <property type="match status" value="1"/>
</dbReference>
<dbReference type="PANTHER" id="PTHR11601">
    <property type="entry name" value="CYSTEINE DESULFURYLASE FAMILY MEMBER"/>
    <property type="match status" value="1"/>
</dbReference>
<dbReference type="Pfam" id="PF00266">
    <property type="entry name" value="Aminotran_5"/>
    <property type="match status" value="1"/>
</dbReference>
<dbReference type="PIRSF" id="PIRSF005572">
    <property type="entry name" value="NifS"/>
    <property type="match status" value="1"/>
</dbReference>
<dbReference type="SUPFAM" id="SSF53383">
    <property type="entry name" value="PLP-dependent transferases"/>
    <property type="match status" value="1"/>
</dbReference>
<dbReference type="PROSITE" id="PS00595">
    <property type="entry name" value="AA_TRANSFER_CLASS_5"/>
    <property type="match status" value="1"/>
</dbReference>
<proteinExistence type="inferred from homology"/>
<accession>Q65RS7</accession>